<keyword id="KW-0456">Lyase</keyword>
<keyword id="KW-1185">Reference proteome</keyword>
<accession>Q8XU38</accession>
<name>PHS_RALN1</name>
<organism>
    <name type="scientific">Ralstonia nicotianae (strain ATCC BAA-1114 / GMI1000)</name>
    <name type="common">Ralstonia solanacearum</name>
    <dbReference type="NCBI Taxonomy" id="267608"/>
    <lineage>
        <taxon>Bacteria</taxon>
        <taxon>Pseudomonadati</taxon>
        <taxon>Pseudomonadota</taxon>
        <taxon>Betaproteobacteria</taxon>
        <taxon>Burkholderiales</taxon>
        <taxon>Burkholderiaceae</taxon>
        <taxon>Ralstonia</taxon>
        <taxon>Ralstonia solanacearum species complex</taxon>
    </lineage>
</organism>
<dbReference type="EC" id="4.2.1.96" evidence="1"/>
<dbReference type="EMBL" id="AL646052">
    <property type="protein sequence ID" value="CAD17144.1"/>
    <property type="molecule type" value="Genomic_DNA"/>
</dbReference>
<dbReference type="RefSeq" id="WP_011003238.1">
    <property type="nucleotide sequence ID" value="NC_003295.1"/>
</dbReference>
<dbReference type="SMR" id="Q8XU38"/>
<dbReference type="STRING" id="267608.RSc3356"/>
<dbReference type="EnsemblBacteria" id="CAD17144">
    <property type="protein sequence ID" value="CAD17144"/>
    <property type="gene ID" value="RSc3356"/>
</dbReference>
<dbReference type="KEGG" id="rso:RSc3356"/>
<dbReference type="PATRIC" id="fig|267608.8.peg.3407"/>
<dbReference type="eggNOG" id="COG2154">
    <property type="taxonomic scope" value="Bacteria"/>
</dbReference>
<dbReference type="HOGENOM" id="CLU_081974_3_2_4"/>
<dbReference type="Proteomes" id="UP000001436">
    <property type="component" value="Chromosome"/>
</dbReference>
<dbReference type="GO" id="GO:0008124">
    <property type="term" value="F:4-alpha-hydroxytetrahydrobiopterin dehydratase activity"/>
    <property type="evidence" value="ECO:0007669"/>
    <property type="project" value="UniProtKB-UniRule"/>
</dbReference>
<dbReference type="GO" id="GO:0006729">
    <property type="term" value="P:tetrahydrobiopterin biosynthetic process"/>
    <property type="evidence" value="ECO:0007669"/>
    <property type="project" value="InterPro"/>
</dbReference>
<dbReference type="CDD" id="cd00914">
    <property type="entry name" value="PCD_DCoH_subfamily_b"/>
    <property type="match status" value="1"/>
</dbReference>
<dbReference type="Gene3D" id="3.30.1360.20">
    <property type="entry name" value="Transcriptional coactivator/pterin dehydratase"/>
    <property type="match status" value="1"/>
</dbReference>
<dbReference type="HAMAP" id="MF_00434">
    <property type="entry name" value="Pterin_4_alpha"/>
    <property type="match status" value="1"/>
</dbReference>
<dbReference type="InterPro" id="IPR036428">
    <property type="entry name" value="PCD_sf"/>
</dbReference>
<dbReference type="InterPro" id="IPR001533">
    <property type="entry name" value="Pterin_deHydtase"/>
</dbReference>
<dbReference type="NCBIfam" id="NF002018">
    <property type="entry name" value="PRK00823.1-3"/>
    <property type="match status" value="1"/>
</dbReference>
<dbReference type="NCBIfam" id="NF002020">
    <property type="entry name" value="PRK00823.1-5"/>
    <property type="match status" value="1"/>
</dbReference>
<dbReference type="PANTHER" id="PTHR12599">
    <property type="entry name" value="PTERIN-4-ALPHA-CARBINOLAMINE DEHYDRATASE"/>
    <property type="match status" value="1"/>
</dbReference>
<dbReference type="PANTHER" id="PTHR12599:SF0">
    <property type="entry name" value="PTERIN-4-ALPHA-CARBINOLAMINE DEHYDRATASE"/>
    <property type="match status" value="1"/>
</dbReference>
<dbReference type="Pfam" id="PF01329">
    <property type="entry name" value="Pterin_4a"/>
    <property type="match status" value="1"/>
</dbReference>
<dbReference type="SUPFAM" id="SSF55248">
    <property type="entry name" value="PCD-like"/>
    <property type="match status" value="1"/>
</dbReference>
<reference key="1">
    <citation type="journal article" date="2002" name="Nature">
        <title>Genome sequence of the plant pathogen Ralstonia solanacearum.</title>
        <authorList>
            <person name="Salanoubat M."/>
            <person name="Genin S."/>
            <person name="Artiguenave F."/>
            <person name="Gouzy J."/>
            <person name="Mangenot S."/>
            <person name="Arlat M."/>
            <person name="Billault A."/>
            <person name="Brottier P."/>
            <person name="Camus J.-C."/>
            <person name="Cattolico L."/>
            <person name="Chandler M."/>
            <person name="Choisne N."/>
            <person name="Claudel-Renard C."/>
            <person name="Cunnac S."/>
            <person name="Demange N."/>
            <person name="Gaspin C."/>
            <person name="Lavie M."/>
            <person name="Moisan A."/>
            <person name="Robert C."/>
            <person name="Saurin W."/>
            <person name="Schiex T."/>
            <person name="Siguier P."/>
            <person name="Thebault P."/>
            <person name="Whalen M."/>
            <person name="Wincker P."/>
            <person name="Levy M."/>
            <person name="Weissenbach J."/>
            <person name="Boucher C.A."/>
        </authorList>
    </citation>
    <scope>NUCLEOTIDE SEQUENCE [LARGE SCALE GENOMIC DNA]</scope>
    <source>
        <strain>ATCC BAA-1114 / GMI1000</strain>
    </source>
</reference>
<gene>
    <name type="primary">phhB</name>
    <name type="ordered locus">RSc3356</name>
    <name type="ORF">RS02631</name>
</gene>
<sequence>MMPTLNDEQRKALFAELPGWSLQNDRDAIHKRFTFTDFNAAFGFMTRVALKAEQVNHHPEWFNVWNRVDITLSTHDANGLTHRDADLARFIEQAAQLTGAK</sequence>
<comment type="catalytic activity">
    <reaction evidence="1">
        <text>(4aS,6R)-4a-hydroxy-L-erythro-5,6,7,8-tetrahydrobiopterin = (6R)-L-erythro-6,7-dihydrobiopterin + H2O</text>
        <dbReference type="Rhea" id="RHEA:11920"/>
        <dbReference type="ChEBI" id="CHEBI:15377"/>
        <dbReference type="ChEBI" id="CHEBI:15642"/>
        <dbReference type="ChEBI" id="CHEBI:43120"/>
        <dbReference type="EC" id="4.2.1.96"/>
    </reaction>
</comment>
<comment type="similarity">
    <text evidence="1">Belongs to the pterin-4-alpha-carbinolamine dehydratase family.</text>
</comment>
<evidence type="ECO:0000255" key="1">
    <source>
        <dbReference type="HAMAP-Rule" id="MF_00434"/>
    </source>
</evidence>
<proteinExistence type="inferred from homology"/>
<protein>
    <recommendedName>
        <fullName evidence="1">Putative pterin-4-alpha-carbinolamine dehydratase</fullName>
        <shortName evidence="1">PHS</shortName>
        <ecNumber evidence="1">4.2.1.96</ecNumber>
    </recommendedName>
    <alternativeName>
        <fullName evidence="1">4-alpha-hydroxy-tetrahydropterin dehydratase</fullName>
    </alternativeName>
    <alternativeName>
        <fullName evidence="1">Pterin carbinolamine dehydratase</fullName>
        <shortName evidence="1">PCD</shortName>
    </alternativeName>
</protein>
<feature type="chain" id="PRO_0000063091" description="Putative pterin-4-alpha-carbinolamine dehydratase">
    <location>
        <begin position="1"/>
        <end position="101"/>
    </location>
</feature>